<organism>
    <name type="scientific">Xenopus tropicalis</name>
    <name type="common">Western clawed frog</name>
    <name type="synonym">Silurana tropicalis</name>
    <dbReference type="NCBI Taxonomy" id="8364"/>
    <lineage>
        <taxon>Eukaryota</taxon>
        <taxon>Metazoa</taxon>
        <taxon>Chordata</taxon>
        <taxon>Craniata</taxon>
        <taxon>Vertebrata</taxon>
        <taxon>Euteleostomi</taxon>
        <taxon>Amphibia</taxon>
        <taxon>Batrachia</taxon>
        <taxon>Anura</taxon>
        <taxon>Pipoidea</taxon>
        <taxon>Pipidae</taxon>
        <taxon>Xenopodinae</taxon>
        <taxon>Xenopus</taxon>
        <taxon>Silurana</taxon>
    </lineage>
</organism>
<comment type="function">
    <text evidence="1">Has very strong antibacterial activity against Gram-positive bacterium S.aureus and very weak activity against Gram-negative bacterium E.coli.</text>
</comment>
<comment type="subcellular location">
    <subcellularLocation>
        <location evidence="1">Secreted</location>
    </subcellularLocation>
</comment>
<comment type="tissue specificity">
    <text evidence="1">Expressed by the skin glands.</text>
</comment>
<comment type="mass spectrometry"/>
<proteinExistence type="evidence at protein level"/>
<name>XT2_XENTR</name>
<dbReference type="InParanoid" id="P84382"/>
<dbReference type="Proteomes" id="UP000008143">
    <property type="component" value="Unplaced"/>
</dbReference>
<dbReference type="GO" id="GO:0005576">
    <property type="term" value="C:extracellular region"/>
    <property type="evidence" value="ECO:0000314"/>
    <property type="project" value="UniProtKB"/>
</dbReference>
<dbReference type="GO" id="GO:0050829">
    <property type="term" value="P:defense response to Gram-negative bacterium"/>
    <property type="evidence" value="ECO:0000314"/>
    <property type="project" value="UniProtKB"/>
</dbReference>
<dbReference type="GO" id="GO:0050830">
    <property type="term" value="P:defense response to Gram-positive bacterium"/>
    <property type="evidence" value="ECO:0000314"/>
    <property type="project" value="UniProtKB"/>
</dbReference>
<dbReference type="GO" id="GO:0044179">
    <property type="term" value="P:hemolysis in another organism"/>
    <property type="evidence" value="ECO:0000314"/>
    <property type="project" value="UniProtKB"/>
</dbReference>
<protein>
    <recommendedName>
        <fullName>Antimicrobial peptide 2</fullName>
    </recommendedName>
    <alternativeName>
        <fullName>XT-2</fullName>
    </alternativeName>
</protein>
<accession>P84382</accession>
<sequence>GVWSTVLGGLKKFAKGGLEAIVNPK</sequence>
<keyword id="KW-0878">Amphibian defense peptide</keyword>
<keyword id="KW-0044">Antibiotic</keyword>
<keyword id="KW-0929">Antimicrobial</keyword>
<keyword id="KW-0903">Direct protein sequencing</keyword>
<keyword id="KW-1185">Reference proteome</keyword>
<keyword id="KW-0964">Secreted</keyword>
<reference evidence="2" key="1">
    <citation type="journal article" date="2001" name="Biochim. Biophys. Acta">
        <title>Antimicrobial peptides isolated from skin secretions of the diploid frog, Xenopus tropicalis (Pipidae).</title>
        <authorList>
            <person name="Ali M.F."/>
            <person name="Soto A."/>
            <person name="Knoop F.C."/>
            <person name="Conlon J.M."/>
        </authorList>
    </citation>
    <scope>PROTEIN SEQUENCE</scope>
    <scope>FUNCTION</scope>
    <scope>SUBCELLULAR LOCATION</scope>
    <scope>TISSUE SPECIFICITY</scope>
    <scope>MASS SPECTROMETRY</scope>
    <source>
        <tissue evidence="1">Skin secretion</tissue>
    </source>
</reference>
<feature type="peptide" id="PRO_0000043866" description="Antimicrobial peptide 2">
    <location>
        <begin position="1"/>
        <end position="25"/>
    </location>
</feature>
<evidence type="ECO:0000269" key="1">
    <source>
    </source>
</evidence>
<evidence type="ECO:0000305" key="2"/>